<organism>
    <name type="scientific">Pectobacterium carotovorum subsp. carotovorum</name>
    <name type="common">Erwinia carotovora subsp. carotovora</name>
    <dbReference type="NCBI Taxonomy" id="555"/>
    <lineage>
        <taxon>Bacteria</taxon>
        <taxon>Pseudomonadati</taxon>
        <taxon>Pseudomonadota</taxon>
        <taxon>Gammaproteobacteria</taxon>
        <taxon>Enterobacterales</taxon>
        <taxon>Pectobacteriaceae</taxon>
        <taxon>Pectobacterium</taxon>
    </lineage>
</organism>
<proteinExistence type="inferred from homology"/>
<feature type="chain" id="PRO_0000184120" description="Flagellar motor switch protein FliN">
    <location>
        <begin position="1" status="less than"/>
        <end position="106"/>
    </location>
</feature>
<feature type="non-terminal residue">
    <location>
        <position position="1"/>
    </location>
</feature>
<dbReference type="EMBL" id="X72969">
    <property type="status" value="NOT_ANNOTATED_CDS"/>
    <property type="molecule type" value="Genomic_DNA"/>
</dbReference>
<dbReference type="PIR" id="S35274">
    <property type="entry name" value="S35274"/>
</dbReference>
<dbReference type="SMR" id="P35539"/>
<dbReference type="GO" id="GO:0009425">
    <property type="term" value="C:bacterial-type flagellum basal body"/>
    <property type="evidence" value="ECO:0007669"/>
    <property type="project" value="UniProtKB-SubCell"/>
</dbReference>
<dbReference type="GO" id="GO:0005886">
    <property type="term" value="C:plasma membrane"/>
    <property type="evidence" value="ECO:0007669"/>
    <property type="project" value="UniProtKB-SubCell"/>
</dbReference>
<dbReference type="GO" id="GO:0003774">
    <property type="term" value="F:cytoskeletal motor activity"/>
    <property type="evidence" value="ECO:0007669"/>
    <property type="project" value="InterPro"/>
</dbReference>
<dbReference type="GO" id="GO:0071973">
    <property type="term" value="P:bacterial-type flagellum-dependent cell motility"/>
    <property type="evidence" value="ECO:0007669"/>
    <property type="project" value="InterPro"/>
</dbReference>
<dbReference type="GO" id="GO:0006935">
    <property type="term" value="P:chemotaxis"/>
    <property type="evidence" value="ECO:0007669"/>
    <property type="project" value="UniProtKB-KW"/>
</dbReference>
<dbReference type="Gene3D" id="2.30.330.10">
    <property type="entry name" value="SpoA-like"/>
    <property type="match status" value="1"/>
</dbReference>
<dbReference type="InterPro" id="IPR012826">
    <property type="entry name" value="FliN"/>
</dbReference>
<dbReference type="InterPro" id="IPR001543">
    <property type="entry name" value="FliN-like_C"/>
</dbReference>
<dbReference type="InterPro" id="IPR051469">
    <property type="entry name" value="FliN/MopA/SpaO"/>
</dbReference>
<dbReference type="InterPro" id="IPR001172">
    <property type="entry name" value="FliN_T3SS_HrcQb"/>
</dbReference>
<dbReference type="InterPro" id="IPR036429">
    <property type="entry name" value="SpoA-like_sf"/>
</dbReference>
<dbReference type="NCBIfam" id="TIGR02480">
    <property type="entry name" value="fliN"/>
    <property type="match status" value="1"/>
</dbReference>
<dbReference type="PANTHER" id="PTHR43484">
    <property type="match status" value="1"/>
</dbReference>
<dbReference type="PANTHER" id="PTHR43484:SF1">
    <property type="entry name" value="FLAGELLAR MOTOR SWITCH PROTEIN FLIN"/>
    <property type="match status" value="1"/>
</dbReference>
<dbReference type="Pfam" id="PF01052">
    <property type="entry name" value="FliMN_C"/>
    <property type="match status" value="1"/>
</dbReference>
<dbReference type="PRINTS" id="PR00956">
    <property type="entry name" value="FLGMOTORFLIN"/>
</dbReference>
<dbReference type="SUPFAM" id="SSF101801">
    <property type="entry name" value="Surface presentation of antigens (SPOA)"/>
    <property type="match status" value="1"/>
</dbReference>
<keyword id="KW-0975">Bacterial flagellum</keyword>
<keyword id="KW-0997">Cell inner membrane</keyword>
<keyword id="KW-1003">Cell membrane</keyword>
<keyword id="KW-0145">Chemotaxis</keyword>
<keyword id="KW-0283">Flagellar rotation</keyword>
<keyword id="KW-0472">Membrane</keyword>
<reference key="1">
    <citation type="journal article" date="1993" name="Mol. Microbiol.">
        <title>A pleiotropic reduced virulence (Rvi-) mutant of Erwinia carotovora subspecies atroseptica is defective in flagella assembly proteins that are conserved in plant and animal bacterial pathogens.</title>
        <authorList>
            <person name="Mulholland V."/>
            <person name="Hinton J.C.D."/>
            <person name="Sidebotham J."/>
            <person name="Toth I.K."/>
            <person name="Hyman L.J."/>
            <person name="Perombelon M.C.M."/>
            <person name="Reeves P.J."/>
            <person name="Salmond G.P.C."/>
        </authorList>
    </citation>
    <scope>NUCLEOTIDE SEQUENCE [GENOMIC DNA]</scope>
    <source>
        <strain>SCRI 193</strain>
    </source>
</reference>
<accession>P35539</accession>
<comment type="function">
    <text evidence="1">FliN is one of three proteins (FliG, FliN, FliM) that form the rotor-mounted switch complex (C ring), located at the base of the basal body. This complex interacts with the CheY and CheZ chemotaxis proteins, in addition to contacting components of the motor that determine the direction of flagellar rotation (By similarity).</text>
</comment>
<comment type="subcellular location">
    <subcellularLocation>
        <location evidence="2">Cell inner membrane</location>
        <topology evidence="2">Peripheral membrane protein</topology>
        <orientation evidence="2">Cytoplasmic side</orientation>
    </subcellularLocation>
    <subcellularLocation>
        <location evidence="2">Bacterial flagellum basal body</location>
    </subcellularLocation>
</comment>
<comment type="similarity">
    <text evidence="2">Belongs to the FliN/MopA/SpaO family.</text>
</comment>
<gene>
    <name type="primary">fliN</name>
    <name type="synonym">mopA</name>
</gene>
<protein>
    <recommendedName>
        <fullName>Flagellar motor switch protein FliN</fullName>
    </recommendedName>
    <alternativeName>
        <fullName>Flagellar motor switch protein MopA</fullName>
    </alternativeName>
</protein>
<sequence length="106" mass="11623">RPTTEGIFKSLDGHDPLGALQDIDLILDIPVKLTVELGRTKMTIKELLRLTQGSVVALDGLAGEPLDILINGYLIAQGEVVVVSDKYGVRITDIITPSERMRRLSR</sequence>
<evidence type="ECO:0000250" key="1"/>
<evidence type="ECO:0000305" key="2"/>
<name>FLIN_PECCC</name>